<evidence type="ECO:0000255" key="1">
    <source>
        <dbReference type="PROSITE-ProRule" id="PRU00042"/>
    </source>
</evidence>
<evidence type="ECO:0000255" key="2">
    <source>
        <dbReference type="PROSITE-ProRule" id="PRU00119"/>
    </source>
</evidence>
<evidence type="ECO:0000269" key="3">
    <source>
    </source>
</evidence>
<evidence type="ECO:0000269" key="4">
    <source>
    </source>
</evidence>
<evidence type="ECO:0000303" key="5">
    <source>
    </source>
</evidence>
<evidence type="ECO:0000305" key="6"/>
<evidence type="ECO:0007744" key="7">
    <source>
    </source>
</evidence>
<proteinExistence type="evidence at protein level"/>
<sequence length="510" mass="58564">MAAAALRDPAQVPVAADLLTDHEEGYVTFEDVAVYFSQEEWRLLDDAQRLLYRNVMLENFTLLASLGLASSKTHEITQLESWEEPFMPAWEVVTSAIPRGCWHGAEAEEAPEQIASVGLLSSNIQQHQKQHCGEKPLKRQEGRVPVLRSCKVHLSEKSLQSREVGKALLISSGVLKHQVTHTGEKSHRSSKSREAFHAGKRHYKCSECGKAFGQKYLLVQHQRLHAGKKTYECSECGKLFRDMSNLFIHQIVHTGERPYGCSNCGKSFSRNAHLIEHQRVHTGEKPFTCSECGKAFRHNSTLVQHHKIHTGVRPYECSECGKLFSFNSSLMKHQRIHTGERPYKCSECGKFYSHKSNLIKHWRVHTGERPYKCSDCGKFFTQCSSLMQHQKVHTGEKPFKCNECGRFFRENSTLVRHQRVHTGAKPYECRECGKFFSQSSTLMQHRKVHIGEKPFKCNECGRLFRENSSLVKHQRVHTGAKPYECRECGKFFRHNSSLFKHRRIHTGEMQ</sequence>
<gene>
    <name type="primary">ZNF419</name>
    <name type="synonym">ZNF419A</name>
</gene>
<reference key="1">
    <citation type="journal article" date="2004" name="Nat. Genet.">
        <title>Complete sequencing and characterization of 21,243 full-length human cDNAs.</title>
        <authorList>
            <person name="Ota T."/>
            <person name="Suzuki Y."/>
            <person name="Nishikawa T."/>
            <person name="Otsuki T."/>
            <person name="Sugiyama T."/>
            <person name="Irie R."/>
            <person name="Wakamatsu A."/>
            <person name="Hayashi K."/>
            <person name="Sato H."/>
            <person name="Nagai K."/>
            <person name="Kimura K."/>
            <person name="Makita H."/>
            <person name="Sekine M."/>
            <person name="Obayashi M."/>
            <person name="Nishi T."/>
            <person name="Shibahara T."/>
            <person name="Tanaka T."/>
            <person name="Ishii S."/>
            <person name="Yamamoto J."/>
            <person name="Saito K."/>
            <person name="Kawai Y."/>
            <person name="Isono Y."/>
            <person name="Nakamura Y."/>
            <person name="Nagahari K."/>
            <person name="Murakami K."/>
            <person name="Yasuda T."/>
            <person name="Iwayanagi T."/>
            <person name="Wagatsuma M."/>
            <person name="Shiratori A."/>
            <person name="Sudo H."/>
            <person name="Hosoiri T."/>
            <person name="Kaku Y."/>
            <person name="Kodaira H."/>
            <person name="Kondo H."/>
            <person name="Sugawara M."/>
            <person name="Takahashi M."/>
            <person name="Kanda K."/>
            <person name="Yokoi T."/>
            <person name="Furuya T."/>
            <person name="Kikkawa E."/>
            <person name="Omura Y."/>
            <person name="Abe K."/>
            <person name="Kamihara K."/>
            <person name="Katsuta N."/>
            <person name="Sato K."/>
            <person name="Tanikawa M."/>
            <person name="Yamazaki M."/>
            <person name="Ninomiya K."/>
            <person name="Ishibashi T."/>
            <person name="Yamashita H."/>
            <person name="Murakawa K."/>
            <person name="Fujimori K."/>
            <person name="Tanai H."/>
            <person name="Kimata M."/>
            <person name="Watanabe M."/>
            <person name="Hiraoka S."/>
            <person name="Chiba Y."/>
            <person name="Ishida S."/>
            <person name="Ono Y."/>
            <person name="Takiguchi S."/>
            <person name="Watanabe S."/>
            <person name="Yosida M."/>
            <person name="Hotuta T."/>
            <person name="Kusano J."/>
            <person name="Kanehori K."/>
            <person name="Takahashi-Fujii A."/>
            <person name="Hara H."/>
            <person name="Tanase T.-O."/>
            <person name="Nomura Y."/>
            <person name="Togiya S."/>
            <person name="Komai F."/>
            <person name="Hara R."/>
            <person name="Takeuchi K."/>
            <person name="Arita M."/>
            <person name="Imose N."/>
            <person name="Musashino K."/>
            <person name="Yuuki H."/>
            <person name="Oshima A."/>
            <person name="Sasaki N."/>
            <person name="Aotsuka S."/>
            <person name="Yoshikawa Y."/>
            <person name="Matsunawa H."/>
            <person name="Ichihara T."/>
            <person name="Shiohata N."/>
            <person name="Sano S."/>
            <person name="Moriya S."/>
            <person name="Momiyama H."/>
            <person name="Satoh N."/>
            <person name="Takami S."/>
            <person name="Terashima Y."/>
            <person name="Suzuki O."/>
            <person name="Nakagawa S."/>
            <person name="Senoh A."/>
            <person name="Mizoguchi H."/>
            <person name="Goto Y."/>
            <person name="Shimizu F."/>
            <person name="Wakebe H."/>
            <person name="Hishigaki H."/>
            <person name="Watanabe T."/>
            <person name="Sugiyama A."/>
            <person name="Takemoto M."/>
            <person name="Kawakami B."/>
            <person name="Yamazaki M."/>
            <person name="Watanabe K."/>
            <person name="Kumagai A."/>
            <person name="Itakura S."/>
            <person name="Fukuzumi Y."/>
            <person name="Fujimori Y."/>
            <person name="Komiyama M."/>
            <person name="Tashiro H."/>
            <person name="Tanigami A."/>
            <person name="Fujiwara T."/>
            <person name="Ono T."/>
            <person name="Yamada K."/>
            <person name="Fujii Y."/>
            <person name="Ozaki K."/>
            <person name="Hirao M."/>
            <person name="Ohmori Y."/>
            <person name="Kawabata A."/>
            <person name="Hikiji T."/>
            <person name="Kobatake N."/>
            <person name="Inagaki H."/>
            <person name="Ikema Y."/>
            <person name="Okamoto S."/>
            <person name="Okitani R."/>
            <person name="Kawakami T."/>
            <person name="Noguchi S."/>
            <person name="Itoh T."/>
            <person name="Shigeta K."/>
            <person name="Senba T."/>
            <person name="Matsumura K."/>
            <person name="Nakajima Y."/>
            <person name="Mizuno T."/>
            <person name="Morinaga M."/>
            <person name="Sasaki M."/>
            <person name="Togashi T."/>
            <person name="Oyama M."/>
            <person name="Hata H."/>
            <person name="Watanabe M."/>
            <person name="Komatsu T."/>
            <person name="Mizushima-Sugano J."/>
            <person name="Satoh T."/>
            <person name="Shirai Y."/>
            <person name="Takahashi Y."/>
            <person name="Nakagawa K."/>
            <person name="Okumura K."/>
            <person name="Nagase T."/>
            <person name="Nomura N."/>
            <person name="Kikuchi H."/>
            <person name="Masuho Y."/>
            <person name="Yamashita R."/>
            <person name="Nakai K."/>
            <person name="Yada T."/>
            <person name="Nakamura Y."/>
            <person name="Ohara O."/>
            <person name="Isogai T."/>
            <person name="Sugano S."/>
        </authorList>
    </citation>
    <scope>NUCLEOTIDE SEQUENCE [LARGE SCALE MRNA] (ISOFORMS 2; 3 AND 6)</scope>
    <scope>VARIANTS GLN-141 AND VAL-336</scope>
    <source>
        <tissue>Brain</tissue>
        <tissue>Coronary arterial endothelium</tissue>
        <tissue>Testis</tissue>
        <tissue>Uterus</tissue>
    </source>
</reference>
<reference key="2">
    <citation type="journal article" date="2004" name="Nature">
        <title>The DNA sequence and biology of human chromosome 19.</title>
        <authorList>
            <person name="Grimwood J."/>
            <person name="Gordon L.A."/>
            <person name="Olsen A.S."/>
            <person name="Terry A."/>
            <person name="Schmutz J."/>
            <person name="Lamerdin J.E."/>
            <person name="Hellsten U."/>
            <person name="Goodstein D."/>
            <person name="Couronne O."/>
            <person name="Tran-Gyamfi M."/>
            <person name="Aerts A."/>
            <person name="Altherr M."/>
            <person name="Ashworth L."/>
            <person name="Bajorek E."/>
            <person name="Black S."/>
            <person name="Branscomb E."/>
            <person name="Caenepeel S."/>
            <person name="Carrano A.V."/>
            <person name="Caoile C."/>
            <person name="Chan Y.M."/>
            <person name="Christensen M."/>
            <person name="Cleland C.A."/>
            <person name="Copeland A."/>
            <person name="Dalin E."/>
            <person name="Dehal P."/>
            <person name="Denys M."/>
            <person name="Detter J.C."/>
            <person name="Escobar J."/>
            <person name="Flowers D."/>
            <person name="Fotopulos D."/>
            <person name="Garcia C."/>
            <person name="Georgescu A.M."/>
            <person name="Glavina T."/>
            <person name="Gomez M."/>
            <person name="Gonzales E."/>
            <person name="Groza M."/>
            <person name="Hammon N."/>
            <person name="Hawkins T."/>
            <person name="Haydu L."/>
            <person name="Ho I."/>
            <person name="Huang W."/>
            <person name="Israni S."/>
            <person name="Jett J."/>
            <person name="Kadner K."/>
            <person name="Kimball H."/>
            <person name="Kobayashi A."/>
            <person name="Larionov V."/>
            <person name="Leem S.-H."/>
            <person name="Lopez F."/>
            <person name="Lou Y."/>
            <person name="Lowry S."/>
            <person name="Malfatti S."/>
            <person name="Martinez D."/>
            <person name="McCready P.M."/>
            <person name="Medina C."/>
            <person name="Morgan J."/>
            <person name="Nelson K."/>
            <person name="Nolan M."/>
            <person name="Ovcharenko I."/>
            <person name="Pitluck S."/>
            <person name="Pollard M."/>
            <person name="Popkie A.P."/>
            <person name="Predki P."/>
            <person name="Quan G."/>
            <person name="Ramirez L."/>
            <person name="Rash S."/>
            <person name="Retterer J."/>
            <person name="Rodriguez A."/>
            <person name="Rogers S."/>
            <person name="Salamov A."/>
            <person name="Salazar A."/>
            <person name="She X."/>
            <person name="Smith D."/>
            <person name="Slezak T."/>
            <person name="Solovyev V."/>
            <person name="Thayer N."/>
            <person name="Tice H."/>
            <person name="Tsai M."/>
            <person name="Ustaszewska A."/>
            <person name="Vo N."/>
            <person name="Wagner M."/>
            <person name="Wheeler J."/>
            <person name="Wu K."/>
            <person name="Xie G."/>
            <person name="Yang J."/>
            <person name="Dubchak I."/>
            <person name="Furey T.S."/>
            <person name="DeJong P."/>
            <person name="Dickson M."/>
            <person name="Gordon D."/>
            <person name="Eichler E.E."/>
            <person name="Pennacchio L.A."/>
            <person name="Richardson P."/>
            <person name="Stubbs L."/>
            <person name="Rokhsar D.S."/>
            <person name="Myers R.M."/>
            <person name="Rubin E.M."/>
            <person name="Lucas S.M."/>
        </authorList>
    </citation>
    <scope>NUCLEOTIDE SEQUENCE [LARGE SCALE GENOMIC DNA]</scope>
</reference>
<reference key="3">
    <citation type="journal article" date="2004" name="Genome Res.">
        <title>The status, quality, and expansion of the NIH full-length cDNA project: the Mammalian Gene Collection (MGC).</title>
        <authorList>
            <consortium name="The MGC Project Team"/>
        </authorList>
    </citation>
    <scope>NUCLEOTIDE SEQUENCE [LARGE SCALE MRNA] (ISOFORM 1)</scope>
    <scope>VARIANTS GLN-141 AND VAL-336</scope>
    <source>
        <tissue>Skin</tissue>
        <tissue>Uterus</tissue>
    </source>
</reference>
<reference key="4">
    <citation type="journal article" date="2017" name="Nat. Struct. Mol. Biol.">
        <title>Site-specific mapping of the human SUMO proteome reveals co-modification with phosphorylation.</title>
        <authorList>
            <person name="Hendriks I.A."/>
            <person name="Lyon D."/>
            <person name="Young C."/>
            <person name="Jensen L.J."/>
            <person name="Vertegaal A.C."/>
            <person name="Nielsen M.L."/>
        </authorList>
    </citation>
    <scope>SUMOYLATION [LARGE SCALE ANALYSIS] AT LYS-166 AND LYS-176</scope>
    <scope>IDENTIFICATION BY MASS SPECTROMETRY [LARGE SCALE ANALYSIS]</scope>
</reference>
<name>ZN419_HUMAN</name>
<protein>
    <recommendedName>
        <fullName>Zinc finger protein 419</fullName>
    </recommendedName>
</protein>
<keyword id="KW-0025">Alternative splicing</keyword>
<keyword id="KW-0238">DNA-binding</keyword>
<keyword id="KW-1017">Isopeptide bond</keyword>
<keyword id="KW-0479">Metal-binding</keyword>
<keyword id="KW-0539">Nucleus</keyword>
<keyword id="KW-1267">Proteomics identification</keyword>
<keyword id="KW-1185">Reference proteome</keyword>
<keyword id="KW-0677">Repeat</keyword>
<keyword id="KW-0804">Transcription</keyword>
<keyword id="KW-0805">Transcription regulation</keyword>
<keyword id="KW-0832">Ubl conjugation</keyword>
<keyword id="KW-0862">Zinc</keyword>
<keyword id="KW-0863">Zinc-finger</keyword>
<dbReference type="EMBL" id="AK026886">
    <property type="protein sequence ID" value="BAB15582.1"/>
    <property type="molecule type" value="mRNA"/>
</dbReference>
<dbReference type="EMBL" id="AK302135">
    <property type="protein sequence ID" value="BAG63509.1"/>
    <property type="molecule type" value="mRNA"/>
</dbReference>
<dbReference type="EMBL" id="AK304569">
    <property type="protein sequence ID" value="BAG65360.1"/>
    <property type="molecule type" value="mRNA"/>
</dbReference>
<dbReference type="EMBL" id="AK316156">
    <property type="protein sequence ID" value="BAH14527.1"/>
    <property type="molecule type" value="mRNA"/>
</dbReference>
<dbReference type="EMBL" id="AK316297">
    <property type="protein sequence ID" value="BAH14668.1"/>
    <property type="molecule type" value="mRNA"/>
</dbReference>
<dbReference type="EMBL" id="AC003005">
    <property type="status" value="NOT_ANNOTATED_CDS"/>
    <property type="molecule type" value="Genomic_DNA"/>
</dbReference>
<dbReference type="EMBL" id="BC008297">
    <property type="protein sequence ID" value="AAH08297.1"/>
    <property type="molecule type" value="mRNA"/>
</dbReference>
<dbReference type="EMBL" id="BC024259">
    <property type="protein sequence ID" value="AAH24259.1"/>
    <property type="molecule type" value="mRNA"/>
</dbReference>
<dbReference type="CCDS" id="CCDS42637.1">
    <molecule id="Q96HQ0-2"/>
</dbReference>
<dbReference type="CCDS" id="CCDS46211.1">
    <molecule id="Q96HQ0-6"/>
</dbReference>
<dbReference type="CCDS" id="CCDS54325.1">
    <molecule id="Q96HQ0-5"/>
</dbReference>
<dbReference type="CCDS" id="CCDS54326.1">
    <molecule id="Q96HQ0-1"/>
</dbReference>
<dbReference type="CCDS" id="CCDS54327.1">
    <molecule id="Q96HQ0-4"/>
</dbReference>
<dbReference type="CCDS" id="CCDS54328.1">
    <molecule id="Q96HQ0-3"/>
</dbReference>
<dbReference type="RefSeq" id="NP_001091961.1">
    <molecule id="Q96HQ0-5"/>
    <property type="nucleotide sequence ID" value="NM_001098491.2"/>
</dbReference>
<dbReference type="RefSeq" id="NP_001091962.1">
    <molecule id="Q96HQ0-4"/>
    <property type="nucleotide sequence ID" value="NM_001098492.2"/>
</dbReference>
<dbReference type="RefSeq" id="NP_001091963.1">
    <molecule id="Q96HQ0-3"/>
    <property type="nucleotide sequence ID" value="NM_001098493.2"/>
</dbReference>
<dbReference type="RefSeq" id="NP_001091964.1">
    <molecule id="Q96HQ0-2"/>
    <property type="nucleotide sequence ID" value="NM_001098494.2"/>
</dbReference>
<dbReference type="RefSeq" id="NP_001091965.1">
    <property type="nucleotide sequence ID" value="NM_001098495.1"/>
</dbReference>
<dbReference type="RefSeq" id="NP_001091966.1">
    <molecule id="Q96HQ0-6"/>
    <property type="nucleotide sequence ID" value="NM_001098496.2"/>
</dbReference>
<dbReference type="RefSeq" id="NP_001278672.1">
    <property type="nucleotide sequence ID" value="NM_001291743.1"/>
</dbReference>
<dbReference type="RefSeq" id="NP_001278673.1">
    <property type="nucleotide sequence ID" value="NM_001291744.1"/>
</dbReference>
<dbReference type="RefSeq" id="NP_001278674.1">
    <property type="nucleotide sequence ID" value="NM_001291745.1"/>
</dbReference>
<dbReference type="RefSeq" id="NP_078967.3">
    <molecule id="Q96HQ0-1"/>
    <property type="nucleotide sequence ID" value="NM_024691.3"/>
</dbReference>
<dbReference type="SMR" id="Q96HQ0"/>
<dbReference type="BioGRID" id="122856">
    <property type="interactions" value="24"/>
</dbReference>
<dbReference type="FunCoup" id="Q96HQ0">
    <property type="interactions" value="14"/>
</dbReference>
<dbReference type="IntAct" id="Q96HQ0">
    <property type="interactions" value="13"/>
</dbReference>
<dbReference type="STRING" id="9606.ENSP00000388864"/>
<dbReference type="iPTMnet" id="Q96HQ0"/>
<dbReference type="PhosphoSitePlus" id="Q96HQ0"/>
<dbReference type="BioMuta" id="ZNF419"/>
<dbReference type="DMDM" id="209572704"/>
<dbReference type="jPOST" id="Q96HQ0"/>
<dbReference type="MassIVE" id="Q96HQ0"/>
<dbReference type="PaxDb" id="9606-ENSP00000388864"/>
<dbReference type="PeptideAtlas" id="Q96HQ0"/>
<dbReference type="ProteomicsDB" id="19485"/>
<dbReference type="ProteomicsDB" id="19860"/>
<dbReference type="ProteomicsDB" id="19957"/>
<dbReference type="ProteomicsDB" id="20201"/>
<dbReference type="ProteomicsDB" id="76774">
    <molecule id="Q96HQ0-1"/>
</dbReference>
<dbReference type="ProteomicsDB" id="76775">
    <molecule id="Q96HQ0-2"/>
</dbReference>
<dbReference type="Antibodypedia" id="826">
    <property type="antibodies" value="130 antibodies from 20 providers"/>
</dbReference>
<dbReference type="DNASU" id="79744"/>
<dbReference type="Ensembl" id="ENST00000221735.12">
    <molecule id="Q96HQ0-1"/>
    <property type="protein sequence ID" value="ENSP00000221735.7"/>
    <property type="gene ID" value="ENSG00000105136.22"/>
</dbReference>
<dbReference type="Ensembl" id="ENST00000347466.10">
    <molecule id="Q96HQ0-2"/>
    <property type="protein sequence ID" value="ENSP00000299860.9"/>
    <property type="gene ID" value="ENSG00000105136.22"/>
</dbReference>
<dbReference type="Ensembl" id="ENST00000415379.6">
    <molecule id="Q96HQ0-6"/>
    <property type="protein sequence ID" value="ENSP00000392129.2"/>
    <property type="gene ID" value="ENSG00000105136.22"/>
</dbReference>
<dbReference type="Ensembl" id="ENST00000424930.6">
    <molecule id="Q96HQ0-5"/>
    <property type="protein sequence ID" value="ENSP00000388864.1"/>
    <property type="gene ID" value="ENSG00000105136.22"/>
</dbReference>
<dbReference type="Ensembl" id="ENST00000426954.6">
    <molecule id="Q96HQ0-4"/>
    <property type="protein sequence ID" value="ENSP00000390916.1"/>
    <property type="gene ID" value="ENSG00000105136.22"/>
</dbReference>
<dbReference type="Ensembl" id="ENST00000442920.6">
    <molecule id="Q96HQ0-3"/>
    <property type="protein sequence ID" value="ENSP00000414709.2"/>
    <property type="gene ID" value="ENSG00000105136.22"/>
</dbReference>
<dbReference type="GeneID" id="79744"/>
<dbReference type="KEGG" id="hsa:79744"/>
<dbReference type="MANE-Select" id="ENST00000221735.12">
    <property type="protein sequence ID" value="ENSP00000221735.7"/>
    <property type="RefSeq nucleotide sequence ID" value="NM_024691.4"/>
    <property type="RefSeq protein sequence ID" value="NP_078967.3"/>
</dbReference>
<dbReference type="UCSC" id="uc002qov.3">
    <molecule id="Q96HQ0-1"/>
    <property type="organism name" value="human"/>
</dbReference>
<dbReference type="AGR" id="HGNC:20648"/>
<dbReference type="CTD" id="79744"/>
<dbReference type="DisGeNET" id="79744"/>
<dbReference type="GeneCards" id="ZNF419"/>
<dbReference type="HGNC" id="HGNC:20648">
    <property type="gene designation" value="ZNF419"/>
</dbReference>
<dbReference type="HPA" id="ENSG00000105136">
    <property type="expression patterns" value="Low tissue specificity"/>
</dbReference>
<dbReference type="MalaCards" id="ZNF419"/>
<dbReference type="MIM" id="617410">
    <property type="type" value="gene"/>
</dbReference>
<dbReference type="neXtProt" id="NX_Q96HQ0"/>
<dbReference type="OpenTargets" id="ENSG00000105136"/>
<dbReference type="PharmGKB" id="PA134871733"/>
<dbReference type="VEuPathDB" id="HostDB:ENSG00000105136"/>
<dbReference type="eggNOG" id="KOG1721">
    <property type="taxonomic scope" value="Eukaryota"/>
</dbReference>
<dbReference type="GeneTree" id="ENSGT00940000164209"/>
<dbReference type="HOGENOM" id="CLU_002678_0_9_1"/>
<dbReference type="InParanoid" id="Q96HQ0"/>
<dbReference type="OMA" id="WCGAEAD"/>
<dbReference type="OrthoDB" id="40579at2759"/>
<dbReference type="PAN-GO" id="Q96HQ0">
    <property type="GO annotations" value="4 GO annotations based on evolutionary models"/>
</dbReference>
<dbReference type="PhylomeDB" id="Q96HQ0"/>
<dbReference type="TreeFam" id="TF339848"/>
<dbReference type="PathwayCommons" id="Q96HQ0"/>
<dbReference type="Reactome" id="R-HSA-212436">
    <property type="pathway name" value="Generic Transcription Pathway"/>
</dbReference>
<dbReference type="SignaLink" id="Q96HQ0"/>
<dbReference type="BioGRID-ORCS" id="79744">
    <property type="hits" value="12 hits in 1176 CRISPR screens"/>
</dbReference>
<dbReference type="GenomeRNAi" id="79744"/>
<dbReference type="Pharos" id="Q96HQ0">
    <property type="development level" value="Tdark"/>
</dbReference>
<dbReference type="PRO" id="PR:Q96HQ0"/>
<dbReference type="Proteomes" id="UP000005640">
    <property type="component" value="Chromosome 19"/>
</dbReference>
<dbReference type="RNAct" id="Q96HQ0">
    <property type="molecule type" value="protein"/>
</dbReference>
<dbReference type="Bgee" id="ENSG00000105136">
    <property type="expression patterns" value="Expressed in olfactory bulb and 200 other cell types or tissues"/>
</dbReference>
<dbReference type="ExpressionAtlas" id="Q96HQ0">
    <property type="expression patterns" value="baseline and differential"/>
</dbReference>
<dbReference type="GO" id="GO:0005634">
    <property type="term" value="C:nucleus"/>
    <property type="evidence" value="ECO:0000318"/>
    <property type="project" value="GO_Central"/>
</dbReference>
<dbReference type="GO" id="GO:0000981">
    <property type="term" value="F:DNA-binding transcription factor activity, RNA polymerase II-specific"/>
    <property type="evidence" value="ECO:0000318"/>
    <property type="project" value="GO_Central"/>
</dbReference>
<dbReference type="GO" id="GO:0000978">
    <property type="term" value="F:RNA polymerase II cis-regulatory region sequence-specific DNA binding"/>
    <property type="evidence" value="ECO:0000318"/>
    <property type="project" value="GO_Central"/>
</dbReference>
<dbReference type="GO" id="GO:0008270">
    <property type="term" value="F:zinc ion binding"/>
    <property type="evidence" value="ECO:0007669"/>
    <property type="project" value="UniProtKB-KW"/>
</dbReference>
<dbReference type="GO" id="GO:0006357">
    <property type="term" value="P:regulation of transcription by RNA polymerase II"/>
    <property type="evidence" value="ECO:0000318"/>
    <property type="project" value="GO_Central"/>
</dbReference>
<dbReference type="CDD" id="cd07765">
    <property type="entry name" value="KRAB_A-box"/>
    <property type="match status" value="1"/>
</dbReference>
<dbReference type="FunFam" id="3.30.160.60:FF:000295">
    <property type="entry name" value="zinc finger protein 19"/>
    <property type="match status" value="1"/>
</dbReference>
<dbReference type="FunFam" id="3.30.160.60:FF:000127">
    <property type="entry name" value="Zinc finger protein 354C"/>
    <property type="match status" value="1"/>
</dbReference>
<dbReference type="FunFam" id="3.30.160.60:FF:000238">
    <property type="entry name" value="Zinc finger protein 485"/>
    <property type="match status" value="2"/>
</dbReference>
<dbReference type="FunFam" id="3.30.160.60:FF:000281">
    <property type="entry name" value="Zinc finger protein 558 isoform X1"/>
    <property type="match status" value="2"/>
</dbReference>
<dbReference type="FunFam" id="3.30.160.60:FF:001270">
    <property type="entry name" value="zinc finger protein 583 isoform X1"/>
    <property type="match status" value="1"/>
</dbReference>
<dbReference type="FunFam" id="3.30.160.60:FF:000098">
    <property type="entry name" value="Zinc finger protein 614"/>
    <property type="match status" value="4"/>
</dbReference>
<dbReference type="Gene3D" id="6.10.140.140">
    <property type="match status" value="1"/>
</dbReference>
<dbReference type="Gene3D" id="3.30.160.60">
    <property type="entry name" value="Classic Zinc Finger"/>
    <property type="match status" value="11"/>
</dbReference>
<dbReference type="InterPro" id="IPR001909">
    <property type="entry name" value="KRAB"/>
</dbReference>
<dbReference type="InterPro" id="IPR036051">
    <property type="entry name" value="KRAB_dom_sf"/>
</dbReference>
<dbReference type="InterPro" id="IPR036236">
    <property type="entry name" value="Znf_C2H2_sf"/>
</dbReference>
<dbReference type="InterPro" id="IPR013087">
    <property type="entry name" value="Znf_C2H2_type"/>
</dbReference>
<dbReference type="PANTHER" id="PTHR24399:SF54">
    <property type="entry name" value="GASTRULA ZINC FINGER PROTEIN XLCGF26.1-LIKE-RELATED"/>
    <property type="match status" value="1"/>
</dbReference>
<dbReference type="PANTHER" id="PTHR24399">
    <property type="entry name" value="ZINC FINGER AND BTB DOMAIN-CONTAINING"/>
    <property type="match status" value="1"/>
</dbReference>
<dbReference type="Pfam" id="PF01352">
    <property type="entry name" value="KRAB"/>
    <property type="match status" value="1"/>
</dbReference>
<dbReference type="Pfam" id="PF00096">
    <property type="entry name" value="zf-C2H2"/>
    <property type="match status" value="11"/>
</dbReference>
<dbReference type="SMART" id="SM00349">
    <property type="entry name" value="KRAB"/>
    <property type="match status" value="1"/>
</dbReference>
<dbReference type="SMART" id="SM00355">
    <property type="entry name" value="ZnF_C2H2"/>
    <property type="match status" value="11"/>
</dbReference>
<dbReference type="SUPFAM" id="SSF57667">
    <property type="entry name" value="beta-beta-alpha zinc fingers"/>
    <property type="match status" value="6"/>
</dbReference>
<dbReference type="SUPFAM" id="SSF109640">
    <property type="entry name" value="KRAB domain (Kruppel-associated box)"/>
    <property type="match status" value="1"/>
</dbReference>
<dbReference type="PROSITE" id="PS50805">
    <property type="entry name" value="KRAB"/>
    <property type="match status" value="1"/>
</dbReference>
<dbReference type="PROSITE" id="PS00028">
    <property type="entry name" value="ZINC_FINGER_C2H2_1"/>
    <property type="match status" value="11"/>
</dbReference>
<dbReference type="PROSITE" id="PS50157">
    <property type="entry name" value="ZINC_FINGER_C2H2_2"/>
    <property type="match status" value="11"/>
</dbReference>
<feature type="chain" id="PRO_0000047574" description="Zinc finger protein 419">
    <location>
        <begin position="1"/>
        <end position="510"/>
    </location>
</feature>
<feature type="domain" description="KRAB" evidence="2">
    <location>
        <begin position="27"/>
        <end position="98"/>
    </location>
</feature>
<feature type="zinc finger region" description="C2H2-type 1" evidence="1">
    <location>
        <begin position="203"/>
        <end position="225"/>
    </location>
</feature>
<feature type="zinc finger region" description="C2H2-type 2" evidence="1">
    <location>
        <begin position="231"/>
        <end position="253"/>
    </location>
</feature>
<feature type="zinc finger region" description="C2H2-type 3" evidence="1">
    <location>
        <begin position="259"/>
        <end position="281"/>
    </location>
</feature>
<feature type="zinc finger region" description="C2H2-type 4" evidence="1">
    <location>
        <begin position="287"/>
        <end position="309"/>
    </location>
</feature>
<feature type="zinc finger region" description="C2H2-type 5" evidence="1">
    <location>
        <begin position="315"/>
        <end position="337"/>
    </location>
</feature>
<feature type="zinc finger region" description="C2H2-type 6" evidence="1">
    <location>
        <begin position="343"/>
        <end position="365"/>
    </location>
</feature>
<feature type="zinc finger region" description="C2H2-type 7" evidence="1">
    <location>
        <begin position="371"/>
        <end position="393"/>
    </location>
</feature>
<feature type="zinc finger region" description="C2H2-type 8" evidence="1">
    <location>
        <begin position="399"/>
        <end position="421"/>
    </location>
</feature>
<feature type="zinc finger region" description="C2H2-type 9" evidence="1">
    <location>
        <begin position="427"/>
        <end position="449"/>
    </location>
</feature>
<feature type="zinc finger region" description="C2H2-type 10" evidence="1">
    <location>
        <begin position="455"/>
        <end position="477"/>
    </location>
</feature>
<feature type="zinc finger region" description="C2H2-type 11" evidence="1">
    <location>
        <begin position="483"/>
        <end position="505"/>
    </location>
</feature>
<feature type="cross-link" description="Glycyl lysine isopeptide (Lys-Gly) (interchain with G-Cter in SUMO2)" evidence="7">
    <location>
        <position position="166"/>
    </location>
</feature>
<feature type="cross-link" description="Glycyl lysine isopeptide (Lys-Gly) (interchain with G-Cter in SUMO2)" evidence="7">
    <location>
        <position position="176"/>
    </location>
</feature>
<feature type="splice variant" id="VSP_046149" description="In isoform 3 and isoform 6." evidence="5">
    <location>
        <begin position="12"/>
        <end position="24"/>
    </location>
</feature>
<feature type="splice variant" id="VSP_047106" description="In isoform 4." evidence="6">
    <original>VPVAADLLTDHEE</original>
    <variation>Q</variation>
    <location>
        <begin position="12"/>
        <end position="24"/>
    </location>
</feature>
<feature type="splice variant" id="VSP_016034" description="In isoform 2 and isoform 5." evidence="5">
    <original>E</original>
    <variation>EQ</variation>
    <location>
        <position position="24"/>
    </location>
</feature>
<feature type="splice variant" id="VSP_016033" description="In isoform 2 and isoform 6." evidence="5">
    <location>
        <begin position="67"/>
        <end position="99"/>
    </location>
</feature>
<feature type="sequence variant" id="VAR_046651" description="In dbSNP:rs2074076." evidence="3 4">
    <original>E</original>
    <variation>Q</variation>
    <location>
        <position position="141"/>
    </location>
</feature>
<feature type="sequence variant" id="VAR_046652" description="In dbSNP:rs2074077." evidence="3 4">
    <original>I</original>
    <variation>V</variation>
    <location>
        <position position="336"/>
    </location>
</feature>
<feature type="sequence conflict" description="In Ref. 1; BAG65360." evidence="6" ref="1">
    <original>E</original>
    <variation>G</variation>
    <location>
        <position position="194"/>
    </location>
</feature>
<comment type="function">
    <text>May be involved in transcriptional regulation.</text>
</comment>
<comment type="interaction">
    <interactant intactId="EBI-10288482">
        <id>Q96HQ0</id>
    </interactant>
    <interactant intactId="EBI-3867333">
        <id>A8MQ03</id>
        <label>CYSRT1</label>
    </interactant>
    <organismsDiffer>false</organismsDiffer>
    <experiments>3</experiments>
</comment>
<comment type="interaction">
    <interactant intactId="EBI-10288482">
        <id>Q96HQ0</id>
    </interactant>
    <interactant intactId="EBI-10172290">
        <id>P60409</id>
        <label>KRTAP10-7</label>
    </interactant>
    <organismsDiffer>false</organismsDiffer>
    <experiments>3</experiments>
</comment>
<comment type="interaction">
    <interactant intactId="EBI-10288482">
        <id>Q96HQ0</id>
    </interactant>
    <interactant intactId="EBI-748974">
        <id>Q96CV9</id>
        <label>OPTN</label>
    </interactant>
    <organismsDiffer>false</organismsDiffer>
    <experiments>3</experiments>
</comment>
<comment type="subcellular location">
    <subcellularLocation>
        <location evidence="6">Nucleus</location>
    </subcellularLocation>
</comment>
<comment type="alternative products">
    <event type="alternative splicing"/>
    <isoform>
        <id>Q96HQ0-1</id>
        <name>1</name>
        <sequence type="displayed"/>
    </isoform>
    <isoform>
        <id>Q96HQ0-2</id>
        <name>2</name>
        <sequence type="described" ref="VSP_016034 VSP_016033"/>
    </isoform>
    <isoform>
        <id>Q96HQ0-3</id>
        <name>3</name>
        <sequence type="described" ref="VSP_046149"/>
    </isoform>
    <isoform>
        <id>Q96HQ0-4</id>
        <name>4</name>
        <sequence type="described" ref="VSP_047106"/>
    </isoform>
    <isoform>
        <id>Q96HQ0-5</id>
        <name>5</name>
        <sequence type="described" ref="VSP_016034"/>
    </isoform>
    <isoform>
        <id>Q96HQ0-6</id>
        <name>6</name>
        <sequence type="described" ref="VSP_046149 VSP_016033"/>
    </isoform>
</comment>
<comment type="similarity">
    <text evidence="6">Belongs to the krueppel C2H2-type zinc-finger protein family.</text>
</comment>
<accession>Q96HQ0</accession>
<accession>B4DXU7</accession>
<accession>B4E348</accession>
<accession>B7ZA41</accession>
<accession>E9PCP4</accession>
<accession>E9PED0</accession>
<accession>E9PET3</accession>
<accession>E9PFX9</accession>
<accession>Q9H5P0</accession>
<organism>
    <name type="scientific">Homo sapiens</name>
    <name type="common">Human</name>
    <dbReference type="NCBI Taxonomy" id="9606"/>
    <lineage>
        <taxon>Eukaryota</taxon>
        <taxon>Metazoa</taxon>
        <taxon>Chordata</taxon>
        <taxon>Craniata</taxon>
        <taxon>Vertebrata</taxon>
        <taxon>Euteleostomi</taxon>
        <taxon>Mammalia</taxon>
        <taxon>Eutheria</taxon>
        <taxon>Euarchontoglires</taxon>
        <taxon>Primates</taxon>
        <taxon>Haplorrhini</taxon>
        <taxon>Catarrhini</taxon>
        <taxon>Hominidae</taxon>
        <taxon>Homo</taxon>
    </lineage>
</organism>